<accession>P51091</accession>
<sequence>MVSSDSVNSRVETLAGSGISTIPKEYIRPKDELVNIGDIFEQEKNNEGPQVPTIDLKEIESDNEKVRAKCREKLKKAAVDWGVMHLVNHGISDELMDKVRKAGKAFFDLPIEQKEKYANDQASGKIQGYGSKLANNASGQLEWEDYFFHCVYPEDKRDLSIWPQTPADYIEATAEYAKQLRELATKVLKVLSLGLGLDEGRLEKEVGGLEELLLQMKINYYPKCPQPELALGVEAHTDVSALTFILHNMVPGLQLFYEGKWVTAKCVPNSIVMHIGDTLEILSNGKYKSILHRGMVNKEKVRISWAVFCEPPKEKIILKPLPETVSEDEPAMFPPRTFAEHIQHKLFRKSQEALLPK</sequence>
<organism>
    <name type="scientific">Malus domestica</name>
    <name type="common">Apple</name>
    <name type="synonym">Pyrus malus</name>
    <dbReference type="NCBI Taxonomy" id="3750"/>
    <lineage>
        <taxon>Eukaryota</taxon>
        <taxon>Viridiplantae</taxon>
        <taxon>Streptophyta</taxon>
        <taxon>Embryophyta</taxon>
        <taxon>Tracheophyta</taxon>
        <taxon>Spermatophyta</taxon>
        <taxon>Magnoliopsida</taxon>
        <taxon>eudicotyledons</taxon>
        <taxon>Gunneridae</taxon>
        <taxon>Pentapetalae</taxon>
        <taxon>rosids</taxon>
        <taxon>fabids</taxon>
        <taxon>Rosales</taxon>
        <taxon>Rosaceae</taxon>
        <taxon>Amygdaloideae</taxon>
        <taxon>Maleae</taxon>
        <taxon>Malus</taxon>
    </lineage>
</organism>
<feature type="chain" id="PRO_0000067301" description="Leucoanthocyanidin dioxygenase">
    <location>
        <begin position="1"/>
        <end position="357"/>
    </location>
</feature>
<feature type="domain" description="Fe2OG dioxygenase" evidence="3">
    <location>
        <begin position="212"/>
        <end position="311"/>
    </location>
</feature>
<feature type="binding site" evidence="3">
    <location>
        <position position="236"/>
    </location>
    <ligand>
        <name>Fe cation</name>
        <dbReference type="ChEBI" id="CHEBI:24875"/>
    </ligand>
</feature>
<feature type="binding site" evidence="3">
    <location>
        <position position="238"/>
    </location>
    <ligand>
        <name>Fe cation</name>
        <dbReference type="ChEBI" id="CHEBI:24875"/>
    </ligand>
</feature>
<feature type="binding site" evidence="3">
    <location>
        <position position="292"/>
    </location>
    <ligand>
        <name>Fe cation</name>
        <dbReference type="ChEBI" id="CHEBI:24875"/>
    </ligand>
</feature>
<gene>
    <name type="primary">ANS</name>
</gene>
<name>LDOX_MALDO</name>
<comment type="function">
    <text>Oxidation of leucoanthocyanidins into anthocyanidins.</text>
</comment>
<comment type="catalytic activity">
    <reaction evidence="2">
        <text>a (2R,3S,4S)-leucoanthocyanidin + 2-oxoglutarate + O2 = a 4-H-anthocyanidin with a 3-hydroxy group + succinate + CO2 + 2 H2O</text>
        <dbReference type="Rhea" id="RHEA:54432"/>
        <dbReference type="ChEBI" id="CHEBI:15377"/>
        <dbReference type="ChEBI" id="CHEBI:15379"/>
        <dbReference type="ChEBI" id="CHEBI:16526"/>
        <dbReference type="ChEBI" id="CHEBI:16810"/>
        <dbReference type="ChEBI" id="CHEBI:30031"/>
        <dbReference type="ChEBI" id="CHEBI:138176"/>
        <dbReference type="ChEBI" id="CHEBI:138177"/>
        <dbReference type="EC" id="1.14.20.4"/>
    </reaction>
</comment>
<comment type="cofactor">
    <cofactor evidence="1">
        <name>Fe cation</name>
        <dbReference type="ChEBI" id="CHEBI:24875"/>
    </cofactor>
    <text evidence="1">Binds 1 Fe cation per subunit.</text>
</comment>
<comment type="cofactor">
    <cofactor evidence="1">
        <name>L-ascorbate</name>
        <dbReference type="ChEBI" id="CHEBI:38290"/>
    </cofactor>
    <text evidence="1">Binds 1 ascorbate molecule per subunit.</text>
</comment>
<comment type="pathway">
    <text>Pigment biosynthesis; anthocyanin biosynthesis.</text>
</comment>
<comment type="similarity">
    <text evidence="4">Belongs to the iron/ascorbate-dependent oxidoreductase family.</text>
</comment>
<reference key="1">
    <citation type="journal article" date="1993" name="Plant Physiol.">
        <title>A Malus cDNA with homology to the Antirrhinum Candica and Zea A2 genes.</title>
        <authorList>
            <person name="Davies K.M."/>
        </authorList>
    </citation>
    <scope>NUCLEOTIDE SEQUENCE [MRNA]</scope>
    <source>
        <tissue>Leaf</tissue>
    </source>
</reference>
<reference key="2">
    <citation type="submission" date="1998-12" db="EMBL/GenBank/DDBJ databases">
        <title>Molecular cloning and expression of anthocyanin biosynthesis genes from 'Fuji apple'.</title>
        <authorList>
            <person name="Lee J.-R."/>
            <person name="Hong S.-T."/>
            <person name="Yoo Y.G."/>
            <person name="Kim S.-R."/>
        </authorList>
    </citation>
    <scope>NUCLEOTIDE SEQUENCE [MRNA]</scope>
    <source>
        <strain>cv. Fuji</strain>
        <tissue>Peelings</tissue>
    </source>
</reference>
<keyword id="KW-0223">Dioxygenase</keyword>
<keyword id="KW-0284">Flavonoid biosynthesis</keyword>
<keyword id="KW-0408">Iron</keyword>
<keyword id="KW-0479">Metal-binding</keyword>
<keyword id="KW-0560">Oxidoreductase</keyword>
<keyword id="KW-0847">Vitamin C</keyword>
<protein>
    <recommendedName>
        <fullName>Leucoanthocyanidin dioxygenase</fullName>
        <shortName>LDOX</shortName>
        <shortName>Leucocyanidin oxygenase</shortName>
        <ecNumber evidence="2">1.14.20.4</ecNumber>
    </recommendedName>
    <alternativeName>
        <fullName>Anthocyanidin synthase</fullName>
    </alternativeName>
    <alternativeName>
        <fullName>Leucoanthocyanidin hydroxylase</fullName>
    </alternativeName>
</protein>
<dbReference type="EC" id="1.14.20.4" evidence="2"/>
<dbReference type="EMBL" id="X71360">
    <property type="protein sequence ID" value="CAA50498.1"/>
    <property type="molecule type" value="mRNA"/>
</dbReference>
<dbReference type="EMBL" id="AF117269">
    <property type="protein sequence ID" value="AAD26205.1"/>
    <property type="molecule type" value="mRNA"/>
</dbReference>
<dbReference type="PIR" id="S33144">
    <property type="entry name" value="S33144"/>
</dbReference>
<dbReference type="SMR" id="P51091"/>
<dbReference type="EnsemblPlants" id="mRNA:MD06G0056100">
    <property type="protein sequence ID" value="mRNA:MD06G0056100"/>
    <property type="gene ID" value="MD06G0056100"/>
</dbReference>
<dbReference type="Gramene" id="mRNA:MD06G0056100">
    <property type="protein sequence ID" value="mRNA:MD06G0056100"/>
    <property type="gene ID" value="MD06G0056100"/>
</dbReference>
<dbReference type="BRENDA" id="1.14.20.4">
    <property type="organism ID" value="3164"/>
</dbReference>
<dbReference type="UniPathway" id="UPA00009"/>
<dbReference type="GO" id="GO:0031418">
    <property type="term" value="F:L-ascorbic acid binding"/>
    <property type="evidence" value="ECO:0007669"/>
    <property type="project" value="UniProtKB-KW"/>
</dbReference>
<dbReference type="GO" id="GO:0050589">
    <property type="term" value="F:leucocyanidin oxygenase activity"/>
    <property type="evidence" value="ECO:0007669"/>
    <property type="project" value="UniProtKB-EC"/>
</dbReference>
<dbReference type="GO" id="GO:0046872">
    <property type="term" value="F:metal ion binding"/>
    <property type="evidence" value="ECO:0007669"/>
    <property type="project" value="UniProtKB-KW"/>
</dbReference>
<dbReference type="GO" id="GO:0009718">
    <property type="term" value="P:anthocyanin-containing compound biosynthetic process"/>
    <property type="evidence" value="ECO:0007669"/>
    <property type="project" value="UniProtKB-UniPathway"/>
</dbReference>
<dbReference type="FunFam" id="2.60.120.330:FF:000009">
    <property type="entry name" value="Flavonol synthase"/>
    <property type="match status" value="1"/>
</dbReference>
<dbReference type="Gene3D" id="2.60.120.330">
    <property type="entry name" value="B-lactam Antibiotic, Isopenicillin N Synthase, Chain"/>
    <property type="match status" value="1"/>
</dbReference>
<dbReference type="InterPro" id="IPR026992">
    <property type="entry name" value="DIOX_N"/>
</dbReference>
<dbReference type="InterPro" id="IPR044861">
    <property type="entry name" value="IPNS-like_FE2OG_OXY"/>
</dbReference>
<dbReference type="InterPro" id="IPR027443">
    <property type="entry name" value="IPNS-like_sf"/>
</dbReference>
<dbReference type="InterPro" id="IPR005123">
    <property type="entry name" value="Oxoglu/Fe-dep_dioxygenase_dom"/>
</dbReference>
<dbReference type="InterPro" id="IPR050295">
    <property type="entry name" value="Plant_2OG-oxidoreductases"/>
</dbReference>
<dbReference type="PANTHER" id="PTHR47991">
    <property type="entry name" value="OXOGLUTARATE/IRON-DEPENDENT DIOXYGENASE"/>
    <property type="match status" value="1"/>
</dbReference>
<dbReference type="Pfam" id="PF03171">
    <property type="entry name" value="2OG-FeII_Oxy"/>
    <property type="match status" value="1"/>
</dbReference>
<dbReference type="Pfam" id="PF14226">
    <property type="entry name" value="DIOX_N"/>
    <property type="match status" value="1"/>
</dbReference>
<dbReference type="SUPFAM" id="SSF51197">
    <property type="entry name" value="Clavaminate synthase-like"/>
    <property type="match status" value="1"/>
</dbReference>
<dbReference type="PROSITE" id="PS51471">
    <property type="entry name" value="FE2OG_OXY"/>
    <property type="match status" value="1"/>
</dbReference>
<proteinExistence type="evidence at transcript level"/>
<evidence type="ECO:0000250" key="1"/>
<evidence type="ECO:0000250" key="2">
    <source>
        <dbReference type="UniProtKB" id="Q96323"/>
    </source>
</evidence>
<evidence type="ECO:0000255" key="3">
    <source>
        <dbReference type="PROSITE-ProRule" id="PRU00805"/>
    </source>
</evidence>
<evidence type="ECO:0000305" key="4"/>